<protein>
    <recommendedName>
        <fullName evidence="1">Redox-sensing transcriptional repressor Rex</fullName>
    </recommendedName>
</protein>
<proteinExistence type="inferred from homology"/>
<name>REX_CLOAB</name>
<feature type="chain" id="PRO_0000097887" description="Redox-sensing transcriptional repressor Rex">
    <location>
        <begin position="1"/>
        <end position="214"/>
    </location>
</feature>
<feature type="DNA-binding region" description="H-T-H motif" evidence="1">
    <location>
        <begin position="17"/>
        <end position="56"/>
    </location>
</feature>
<feature type="binding site" evidence="1">
    <location>
        <begin position="91"/>
        <end position="96"/>
    </location>
    <ligand>
        <name>NAD(+)</name>
        <dbReference type="ChEBI" id="CHEBI:57540"/>
    </ligand>
</feature>
<sequence>MDKKKNISMAVIRRLPKYHRYLEELLKSDVDRISSKELSEKIGFTASQIRQDLNCFGDFGQQGYGYNVKDLSREVDNILGLTKMYNTIIIGAGNIGQAIANYINFQKMGFDLKAIFDINPKLIGLKIQDVEVRDVDNIDGFLQKNKIDIGIICVPSKNAQKVCDIIVKNNVNGIWNFAPVDLMTPENVIVENVHLSESLLTLSCLLQEVNKSRD</sequence>
<keyword id="KW-0963">Cytoplasm</keyword>
<keyword id="KW-0238">DNA-binding</keyword>
<keyword id="KW-0520">NAD</keyword>
<keyword id="KW-1185">Reference proteome</keyword>
<keyword id="KW-0678">Repressor</keyword>
<keyword id="KW-0804">Transcription</keyword>
<keyword id="KW-0805">Transcription regulation</keyword>
<reference key="1">
    <citation type="journal article" date="2001" name="J. Bacteriol.">
        <title>Genome sequence and comparative analysis of the solvent-producing bacterium Clostridium acetobutylicum.</title>
        <authorList>
            <person name="Noelling J."/>
            <person name="Breton G."/>
            <person name="Omelchenko M.V."/>
            <person name="Makarova K.S."/>
            <person name="Zeng Q."/>
            <person name="Gibson R."/>
            <person name="Lee H.M."/>
            <person name="Dubois J."/>
            <person name="Qiu D."/>
            <person name="Hitti J."/>
            <person name="Wolf Y.I."/>
            <person name="Tatusov R.L."/>
            <person name="Sabathe F."/>
            <person name="Doucette-Stamm L.A."/>
            <person name="Soucaille P."/>
            <person name="Daly M.J."/>
            <person name="Bennett G.N."/>
            <person name="Koonin E.V."/>
            <person name="Smith D.R."/>
        </authorList>
    </citation>
    <scope>NUCLEOTIDE SEQUENCE [LARGE SCALE GENOMIC DNA]</scope>
    <source>
        <strain>ATCC 824 / DSM 792 / JCM 1419 / IAM 19013 / LMG 5710 / NBRC 13948 / NRRL B-527 / VKM B-1787 / 2291 / W</strain>
    </source>
</reference>
<gene>
    <name evidence="1" type="primary">rex</name>
    <name type="ordered locus">CA_C2713</name>
</gene>
<organism>
    <name type="scientific">Clostridium acetobutylicum (strain ATCC 824 / DSM 792 / JCM 1419 / IAM 19013 / LMG 5710 / NBRC 13948 / NRRL B-527 / VKM B-1787 / 2291 / W)</name>
    <dbReference type="NCBI Taxonomy" id="272562"/>
    <lineage>
        <taxon>Bacteria</taxon>
        <taxon>Bacillati</taxon>
        <taxon>Bacillota</taxon>
        <taxon>Clostridia</taxon>
        <taxon>Eubacteriales</taxon>
        <taxon>Clostridiaceae</taxon>
        <taxon>Clostridium</taxon>
    </lineage>
</organism>
<accession>Q97FM3</accession>
<evidence type="ECO:0000255" key="1">
    <source>
        <dbReference type="HAMAP-Rule" id="MF_01131"/>
    </source>
</evidence>
<dbReference type="EMBL" id="AE001437">
    <property type="protein sequence ID" value="AAK80659.1"/>
    <property type="molecule type" value="Genomic_DNA"/>
</dbReference>
<dbReference type="PIR" id="H97233">
    <property type="entry name" value="H97233"/>
</dbReference>
<dbReference type="RefSeq" id="NP_349319.1">
    <property type="nucleotide sequence ID" value="NC_003030.1"/>
</dbReference>
<dbReference type="RefSeq" id="WP_010966000.1">
    <property type="nucleotide sequence ID" value="NC_003030.1"/>
</dbReference>
<dbReference type="SMR" id="Q97FM3"/>
<dbReference type="STRING" id="272562.CA_C2713"/>
<dbReference type="GeneID" id="44999202"/>
<dbReference type="KEGG" id="cac:CA_C2713"/>
<dbReference type="PATRIC" id="fig|272562.8.peg.2903"/>
<dbReference type="eggNOG" id="COG2344">
    <property type="taxonomic scope" value="Bacteria"/>
</dbReference>
<dbReference type="HOGENOM" id="CLU_061534_1_0_9"/>
<dbReference type="OrthoDB" id="9784760at2"/>
<dbReference type="Proteomes" id="UP000000814">
    <property type="component" value="Chromosome"/>
</dbReference>
<dbReference type="GO" id="GO:0005737">
    <property type="term" value="C:cytoplasm"/>
    <property type="evidence" value="ECO:0007669"/>
    <property type="project" value="UniProtKB-SubCell"/>
</dbReference>
<dbReference type="GO" id="GO:0003677">
    <property type="term" value="F:DNA binding"/>
    <property type="evidence" value="ECO:0007669"/>
    <property type="project" value="UniProtKB-UniRule"/>
</dbReference>
<dbReference type="GO" id="GO:0003700">
    <property type="term" value="F:DNA-binding transcription factor activity"/>
    <property type="evidence" value="ECO:0007669"/>
    <property type="project" value="UniProtKB-UniRule"/>
</dbReference>
<dbReference type="GO" id="GO:0045892">
    <property type="term" value="P:negative regulation of DNA-templated transcription"/>
    <property type="evidence" value="ECO:0007669"/>
    <property type="project" value="InterPro"/>
</dbReference>
<dbReference type="GO" id="GO:0051775">
    <property type="term" value="P:response to redox state"/>
    <property type="evidence" value="ECO:0007669"/>
    <property type="project" value="InterPro"/>
</dbReference>
<dbReference type="Gene3D" id="3.40.50.720">
    <property type="entry name" value="NAD(P)-binding Rossmann-like Domain"/>
    <property type="match status" value="1"/>
</dbReference>
<dbReference type="Gene3D" id="1.10.10.10">
    <property type="entry name" value="Winged helix-like DNA-binding domain superfamily/Winged helix DNA-binding domain"/>
    <property type="match status" value="1"/>
</dbReference>
<dbReference type="HAMAP" id="MF_01131">
    <property type="entry name" value="Rex"/>
    <property type="match status" value="1"/>
</dbReference>
<dbReference type="InterPro" id="IPR003781">
    <property type="entry name" value="CoA-bd"/>
</dbReference>
<dbReference type="InterPro" id="IPR036291">
    <property type="entry name" value="NAD(P)-bd_dom_sf"/>
</dbReference>
<dbReference type="InterPro" id="IPR009718">
    <property type="entry name" value="Rex_DNA-bd_C_dom"/>
</dbReference>
<dbReference type="InterPro" id="IPR022876">
    <property type="entry name" value="Tscrpt_rep_Rex"/>
</dbReference>
<dbReference type="InterPro" id="IPR036388">
    <property type="entry name" value="WH-like_DNA-bd_sf"/>
</dbReference>
<dbReference type="InterPro" id="IPR036390">
    <property type="entry name" value="WH_DNA-bd_sf"/>
</dbReference>
<dbReference type="NCBIfam" id="NF003989">
    <property type="entry name" value="PRK05472.1-3"/>
    <property type="match status" value="1"/>
</dbReference>
<dbReference type="NCBIfam" id="NF003990">
    <property type="entry name" value="PRK05472.1-4"/>
    <property type="match status" value="1"/>
</dbReference>
<dbReference type="NCBIfam" id="NF003993">
    <property type="entry name" value="PRK05472.2-2"/>
    <property type="match status" value="1"/>
</dbReference>
<dbReference type="NCBIfam" id="NF003994">
    <property type="entry name" value="PRK05472.2-3"/>
    <property type="match status" value="1"/>
</dbReference>
<dbReference type="NCBIfam" id="NF003995">
    <property type="entry name" value="PRK05472.2-4"/>
    <property type="match status" value="1"/>
</dbReference>
<dbReference type="NCBIfam" id="NF003996">
    <property type="entry name" value="PRK05472.2-5"/>
    <property type="match status" value="1"/>
</dbReference>
<dbReference type="PANTHER" id="PTHR35786">
    <property type="entry name" value="REDOX-SENSING TRANSCRIPTIONAL REPRESSOR REX"/>
    <property type="match status" value="1"/>
</dbReference>
<dbReference type="PANTHER" id="PTHR35786:SF1">
    <property type="entry name" value="REDOX-SENSING TRANSCRIPTIONAL REPRESSOR REX 1"/>
    <property type="match status" value="1"/>
</dbReference>
<dbReference type="Pfam" id="PF02629">
    <property type="entry name" value="CoA_binding"/>
    <property type="match status" value="1"/>
</dbReference>
<dbReference type="Pfam" id="PF06971">
    <property type="entry name" value="Put_DNA-bind_N"/>
    <property type="match status" value="1"/>
</dbReference>
<dbReference type="SMART" id="SM00881">
    <property type="entry name" value="CoA_binding"/>
    <property type="match status" value="1"/>
</dbReference>
<dbReference type="SUPFAM" id="SSF51735">
    <property type="entry name" value="NAD(P)-binding Rossmann-fold domains"/>
    <property type="match status" value="1"/>
</dbReference>
<dbReference type="SUPFAM" id="SSF46785">
    <property type="entry name" value="Winged helix' DNA-binding domain"/>
    <property type="match status" value="1"/>
</dbReference>
<comment type="function">
    <text evidence="1">Modulates transcription in response to changes in cellular NADH/NAD(+) redox state.</text>
</comment>
<comment type="subunit">
    <text evidence="1">Homodimer.</text>
</comment>
<comment type="subcellular location">
    <subcellularLocation>
        <location evidence="1">Cytoplasm</location>
    </subcellularLocation>
</comment>
<comment type="similarity">
    <text evidence="1">Belongs to the transcriptional regulatory Rex family.</text>
</comment>